<sequence length="191" mass="20912">MKKSLLGLTFASLMFSAGSAVAADYKIDKEGQHAFVNFRIQHLGYSWLYGTFKDFDGTFTFDEKNPAADKVNVTINTTSVDTNHAERDKHLRSADFLNTAKYPQATFTSTSVKKDGDELDITGDLTLNGVTKPVTLEAKLIGQGDDPWGGKRAGFEAEGKIKLKDFNIKTDLGPASQEVDLIISVEGVQQK</sequence>
<keyword id="KW-0574">Periplasm</keyword>
<keyword id="KW-1185">Reference proteome</keyword>
<keyword id="KW-0732">Signal</keyword>
<protein>
    <recommendedName>
        <fullName evidence="1">Protein YceI</fullName>
    </recommendedName>
</protein>
<name>YCEI_SHISS</name>
<organism>
    <name type="scientific">Shigella sonnei (strain Ss046)</name>
    <dbReference type="NCBI Taxonomy" id="300269"/>
    <lineage>
        <taxon>Bacteria</taxon>
        <taxon>Pseudomonadati</taxon>
        <taxon>Pseudomonadota</taxon>
        <taxon>Gammaproteobacteria</taxon>
        <taxon>Enterobacterales</taxon>
        <taxon>Enterobacteriaceae</taxon>
        <taxon>Shigella</taxon>
    </lineage>
</organism>
<evidence type="ECO:0000255" key="1">
    <source>
        <dbReference type="HAMAP-Rule" id="MF_00780"/>
    </source>
</evidence>
<proteinExistence type="inferred from homology"/>
<reference key="1">
    <citation type="journal article" date="2005" name="Nucleic Acids Res.">
        <title>Genome dynamics and diversity of Shigella species, the etiologic agents of bacillary dysentery.</title>
        <authorList>
            <person name="Yang F."/>
            <person name="Yang J."/>
            <person name="Zhang X."/>
            <person name="Chen L."/>
            <person name="Jiang Y."/>
            <person name="Yan Y."/>
            <person name="Tang X."/>
            <person name="Wang J."/>
            <person name="Xiong Z."/>
            <person name="Dong J."/>
            <person name="Xue Y."/>
            <person name="Zhu Y."/>
            <person name="Xu X."/>
            <person name="Sun L."/>
            <person name="Chen S."/>
            <person name="Nie H."/>
            <person name="Peng J."/>
            <person name="Xu J."/>
            <person name="Wang Y."/>
            <person name="Yuan Z."/>
            <person name="Wen Y."/>
            <person name="Yao Z."/>
            <person name="Shen Y."/>
            <person name="Qiang B."/>
            <person name="Hou Y."/>
            <person name="Yu J."/>
            <person name="Jin Q."/>
        </authorList>
    </citation>
    <scope>NUCLEOTIDE SEQUENCE [LARGE SCALE GENOMIC DNA]</scope>
    <source>
        <strain>Ss046</strain>
    </source>
</reference>
<gene>
    <name evidence="1" type="primary">yceI</name>
    <name type="ordered locus">SSON_1076</name>
</gene>
<accession>Q3Z360</accession>
<comment type="subcellular location">
    <subcellularLocation>
        <location evidence="1">Periplasm</location>
    </subcellularLocation>
</comment>
<comment type="similarity">
    <text evidence="1">Belongs to the UPF0312 family. Type 1 subfamily.</text>
</comment>
<feature type="signal peptide" evidence="1">
    <location>
        <begin position="1"/>
        <end position="22"/>
    </location>
</feature>
<feature type="chain" id="PRO_0000226327" description="Protein YceI">
    <location>
        <begin position="23"/>
        <end position="191"/>
    </location>
</feature>
<dbReference type="EMBL" id="CP000038">
    <property type="protein sequence ID" value="AAZ87802.1"/>
    <property type="molecule type" value="Genomic_DNA"/>
</dbReference>
<dbReference type="RefSeq" id="WP_000749261.1">
    <property type="nucleotide sequence ID" value="NC_007384.1"/>
</dbReference>
<dbReference type="SMR" id="Q3Z360"/>
<dbReference type="KEGG" id="ssn:SSON_1076"/>
<dbReference type="HOGENOM" id="CLU_071003_1_2_6"/>
<dbReference type="Proteomes" id="UP000002529">
    <property type="component" value="Chromosome"/>
</dbReference>
<dbReference type="GO" id="GO:0042597">
    <property type="term" value="C:periplasmic space"/>
    <property type="evidence" value="ECO:0007669"/>
    <property type="project" value="UniProtKB-SubCell"/>
</dbReference>
<dbReference type="Gene3D" id="2.40.128.110">
    <property type="entry name" value="Lipid/polyisoprenoid-binding, YceI-like"/>
    <property type="match status" value="1"/>
</dbReference>
<dbReference type="HAMAP" id="MF_00780">
    <property type="entry name" value="UPF0312"/>
    <property type="match status" value="1"/>
</dbReference>
<dbReference type="InterPro" id="IPR007372">
    <property type="entry name" value="Lipid/polyisoprenoid-bd_YceI"/>
</dbReference>
<dbReference type="InterPro" id="IPR036761">
    <property type="entry name" value="TTHA0802/YceI-like_sf"/>
</dbReference>
<dbReference type="InterPro" id="IPR023480">
    <property type="entry name" value="UPF0312/YceI"/>
</dbReference>
<dbReference type="NCBIfam" id="NF002994">
    <property type="entry name" value="PRK03757.1"/>
    <property type="match status" value="1"/>
</dbReference>
<dbReference type="PANTHER" id="PTHR34406">
    <property type="entry name" value="PROTEIN YCEI"/>
    <property type="match status" value="1"/>
</dbReference>
<dbReference type="PANTHER" id="PTHR34406:SF1">
    <property type="entry name" value="PROTEIN YCEI"/>
    <property type="match status" value="1"/>
</dbReference>
<dbReference type="Pfam" id="PF04264">
    <property type="entry name" value="YceI"/>
    <property type="match status" value="1"/>
</dbReference>
<dbReference type="SMART" id="SM00867">
    <property type="entry name" value="YceI"/>
    <property type="match status" value="1"/>
</dbReference>
<dbReference type="SUPFAM" id="SSF101874">
    <property type="entry name" value="YceI-like"/>
    <property type="match status" value="1"/>
</dbReference>